<sequence>MEPAFGEVNQLGGVFVNGRPLPNAIRLRIVELAQLGIRPCDISRQLRVSHGCVSKILARYNETGSILPGAIGGSKPRVTTPTVVKHIRTYKQRDPGIFAWEIRDRLLADGVCDKYNVPSVSSISRILRNKIGNLTQQGHYDSYKQHQPAPQPALPYNHIYSYPSPITAAAAKVPTPPGVPAIPGSVAMPRTWPSSHSVTDILGIRSITDQVSDSSPYHSPKVEEWSSLGRNNFPAAAPHAVNGLEKGALEQETKYSQAPNGLPAVGSFVSASSMAPYPTPAQVSPYMTYSAAPSGYVGGHGWQHAGSTPLSPHNCDIPASLAFKGMQAAREGSHSVTASAL</sequence>
<proteinExistence type="inferred from homology"/>
<gene>
    <name type="primary">PAX9</name>
</gene>
<dbReference type="EMBL" id="DQ067519">
    <property type="protein sequence ID" value="AAZ39858.1"/>
    <property type="molecule type" value="Genomic_DNA"/>
</dbReference>
<dbReference type="EMBL" id="DQ067517">
    <property type="protein sequence ID" value="AAZ39858.1"/>
    <property type="status" value="JOINED"/>
    <property type="molecule type" value="Genomic_DNA"/>
</dbReference>
<dbReference type="EMBL" id="DQ067518">
    <property type="protein sequence ID" value="AAZ39858.1"/>
    <property type="status" value="JOINED"/>
    <property type="molecule type" value="Genomic_DNA"/>
</dbReference>
<dbReference type="RefSeq" id="XP_035116254.1">
    <property type="nucleotide sequence ID" value="XM_035260363.2"/>
</dbReference>
<dbReference type="SMR" id="Q2VL58"/>
<dbReference type="FunCoup" id="Q2VL58">
    <property type="interactions" value="1613"/>
</dbReference>
<dbReference type="STRING" id="9483.ENSCJAP00000077558"/>
<dbReference type="GeneID" id="100410725"/>
<dbReference type="eggNOG" id="KOG3517">
    <property type="taxonomic scope" value="Eukaryota"/>
</dbReference>
<dbReference type="HOGENOM" id="CLU_019281_3_0_1"/>
<dbReference type="InParanoid" id="Q2VL58"/>
<dbReference type="TreeFam" id="TF315397"/>
<dbReference type="Proteomes" id="UP000008225">
    <property type="component" value="Chromosome 10"/>
</dbReference>
<dbReference type="GO" id="GO:0005634">
    <property type="term" value="C:nucleus"/>
    <property type="evidence" value="ECO:0007669"/>
    <property type="project" value="UniProtKB-SubCell"/>
</dbReference>
<dbReference type="GO" id="GO:0000981">
    <property type="term" value="F:DNA-binding transcription factor activity, RNA polymerase II-specific"/>
    <property type="evidence" value="ECO:0007669"/>
    <property type="project" value="TreeGrafter"/>
</dbReference>
<dbReference type="GO" id="GO:0000978">
    <property type="term" value="F:RNA polymerase II cis-regulatory region sequence-specific DNA binding"/>
    <property type="evidence" value="ECO:0007669"/>
    <property type="project" value="TreeGrafter"/>
</dbReference>
<dbReference type="CDD" id="cd00131">
    <property type="entry name" value="PAX"/>
    <property type="match status" value="1"/>
</dbReference>
<dbReference type="FunFam" id="1.10.10.10:FF:000003">
    <property type="entry name" value="Paired box protein Pax-6"/>
    <property type="match status" value="1"/>
</dbReference>
<dbReference type="FunFam" id="1.10.10.10:FF:000084">
    <property type="entry name" value="paired box protein Pax-9"/>
    <property type="match status" value="1"/>
</dbReference>
<dbReference type="Gene3D" id="1.10.10.10">
    <property type="entry name" value="Winged helix-like DNA-binding domain superfamily/Winged helix DNA-binding domain"/>
    <property type="match status" value="2"/>
</dbReference>
<dbReference type="InterPro" id="IPR009057">
    <property type="entry name" value="Homeodomain-like_sf"/>
</dbReference>
<dbReference type="InterPro" id="IPR043182">
    <property type="entry name" value="PAIRED_DNA-bd_dom"/>
</dbReference>
<dbReference type="InterPro" id="IPR001523">
    <property type="entry name" value="Paired_dom"/>
</dbReference>
<dbReference type="InterPro" id="IPR043565">
    <property type="entry name" value="PAX_fam"/>
</dbReference>
<dbReference type="InterPro" id="IPR036388">
    <property type="entry name" value="WH-like_DNA-bd_sf"/>
</dbReference>
<dbReference type="PANTHER" id="PTHR45636">
    <property type="entry name" value="PAIRED BOX PROTEIN PAX-6-RELATED-RELATED"/>
    <property type="match status" value="1"/>
</dbReference>
<dbReference type="PANTHER" id="PTHR45636:SF13">
    <property type="entry name" value="PAIRED BOX PROTEIN PAX-9"/>
    <property type="match status" value="1"/>
</dbReference>
<dbReference type="Pfam" id="PF00292">
    <property type="entry name" value="PAX"/>
    <property type="match status" value="1"/>
</dbReference>
<dbReference type="PRINTS" id="PR00027">
    <property type="entry name" value="PAIREDBOX"/>
</dbReference>
<dbReference type="SMART" id="SM00351">
    <property type="entry name" value="PAX"/>
    <property type="match status" value="1"/>
</dbReference>
<dbReference type="SUPFAM" id="SSF46689">
    <property type="entry name" value="Homeodomain-like"/>
    <property type="match status" value="1"/>
</dbReference>
<dbReference type="PROSITE" id="PS00034">
    <property type="entry name" value="PAIRED_1"/>
    <property type="match status" value="1"/>
</dbReference>
<dbReference type="PROSITE" id="PS51057">
    <property type="entry name" value="PAIRED_2"/>
    <property type="match status" value="1"/>
</dbReference>
<accession>Q2VL58</accession>
<protein>
    <recommendedName>
        <fullName>Paired box protein Pax-9</fullName>
    </recommendedName>
</protein>
<name>PAX9_CALJA</name>
<comment type="function">
    <text evidence="1">Transcription factor required for normal development of thymus, parathyroid glands, ultimobranchial bodies, teeth, skeletal elements of skull and larynx as well as distal limbs.</text>
</comment>
<comment type="subunit">
    <text evidence="1">Interacts with KDM5B.</text>
</comment>
<comment type="subcellular location">
    <subcellularLocation>
        <location>Nucleus</location>
    </subcellularLocation>
</comment>
<organism>
    <name type="scientific">Callithrix jacchus</name>
    <name type="common">White-tufted-ear marmoset</name>
    <dbReference type="NCBI Taxonomy" id="9483"/>
    <lineage>
        <taxon>Eukaryota</taxon>
        <taxon>Metazoa</taxon>
        <taxon>Chordata</taxon>
        <taxon>Craniata</taxon>
        <taxon>Vertebrata</taxon>
        <taxon>Euteleostomi</taxon>
        <taxon>Mammalia</taxon>
        <taxon>Eutheria</taxon>
        <taxon>Euarchontoglires</taxon>
        <taxon>Primates</taxon>
        <taxon>Haplorrhini</taxon>
        <taxon>Platyrrhini</taxon>
        <taxon>Cebidae</taxon>
        <taxon>Callitrichinae</taxon>
        <taxon>Callithrix</taxon>
        <taxon>Callithrix</taxon>
    </lineage>
</organism>
<reference key="1">
    <citation type="journal article" date="2006" name="Mol. Biol. Evol.">
        <title>Molecular evolution of the primate developmental genes MSX1 and PAX9.</title>
        <authorList>
            <person name="Perry G.H."/>
            <person name="Verrelli B.C."/>
            <person name="Stone A.C."/>
        </authorList>
    </citation>
    <scope>NUCLEOTIDE SEQUENCE [GENOMIC DNA]</scope>
    <source>
        <strain>Isolate Cj220-87</strain>
    </source>
</reference>
<evidence type="ECO:0000250" key="1"/>
<evidence type="ECO:0000255" key="2">
    <source>
        <dbReference type="PROSITE-ProRule" id="PRU00381"/>
    </source>
</evidence>
<keyword id="KW-0217">Developmental protein</keyword>
<keyword id="KW-0238">DNA-binding</keyword>
<keyword id="KW-0539">Nucleus</keyword>
<keyword id="KW-0563">Paired box</keyword>
<keyword id="KW-1185">Reference proteome</keyword>
<keyword id="KW-0804">Transcription</keyword>
<keyword id="KW-0805">Transcription regulation</keyword>
<feature type="chain" id="PRO_0000050201" description="Paired box protein Pax-9">
    <location>
        <begin position="1"/>
        <end position="341"/>
    </location>
</feature>
<feature type="DNA-binding region" description="Paired" evidence="2">
    <location>
        <begin position="4"/>
        <end position="130"/>
    </location>
</feature>
<feature type="region of interest" description="PAI subdomain" evidence="2">
    <location>
        <begin position="7"/>
        <end position="63"/>
    </location>
</feature>
<feature type="region of interest" description="RED subdomain" evidence="2">
    <location>
        <begin position="82"/>
        <end position="130"/>
    </location>
</feature>
<feature type="region of interest" description="Interaction with KDM5B" evidence="1">
    <location>
        <begin position="168"/>
        <end position="189"/>
    </location>
</feature>